<reference key="1">
    <citation type="journal article" date="2008" name="Mol. Immunol.">
        <title>Characterization of the chicken CD200 receptor family.</title>
        <authorList>
            <person name="Viertlboeck B.C."/>
            <person name="Hanczaruk M.A."/>
            <person name="Schmitt F.C."/>
            <person name="Schmitt R."/>
            <person name="Goebel T.W."/>
        </authorList>
    </citation>
    <scope>NUCLEOTIDE SEQUENCE [MRNA]</scope>
    <scope>TISSUE SPECIFICITY</scope>
    <source>
        <strain>M11</strain>
    </source>
</reference>
<reference key="2">
    <citation type="journal article" date="2005" name="Genome Biol.">
        <title>Full-length cDNAs from chicken bursal lymphocytes to facilitate gene function analysis.</title>
        <authorList>
            <person name="Caldwell R.B."/>
            <person name="Kierzek A.M."/>
            <person name="Arakawa H."/>
            <person name="Bezzubov Y."/>
            <person name="Zaim J."/>
            <person name="Fiedler P."/>
            <person name="Kutter S."/>
            <person name="Blagodatski A."/>
            <person name="Kostovska D."/>
            <person name="Koter M."/>
            <person name="Plachy J."/>
            <person name="Carninci P."/>
            <person name="Hayashizaki Y."/>
            <person name="Buerstedde J.-M."/>
        </authorList>
    </citation>
    <scope>NUCLEOTIDE SEQUENCE [LARGE SCALE MRNA]</scope>
    <source>
        <strain>CB</strain>
        <tissue>Bursa of Fabricius</tissue>
    </source>
</reference>
<keyword id="KW-1015">Disulfide bond</keyword>
<keyword id="KW-0325">Glycoprotein</keyword>
<keyword id="KW-0393">Immunoglobulin domain</keyword>
<keyword id="KW-0472">Membrane</keyword>
<keyword id="KW-0675">Receptor</keyword>
<keyword id="KW-1185">Reference proteome</keyword>
<keyword id="KW-0677">Repeat</keyword>
<keyword id="KW-0735">Signal-anchor</keyword>
<keyword id="KW-0812">Transmembrane</keyword>
<keyword id="KW-1133">Transmembrane helix</keyword>
<accession>Q2YHT5</accession>
<accession>Q5ZIJ4</accession>
<evidence type="ECO:0000255" key="1"/>
<evidence type="ECO:0000255" key="2">
    <source>
        <dbReference type="PROSITE-ProRule" id="PRU00114"/>
    </source>
</evidence>
<evidence type="ECO:0000269" key="3">
    <source>
    </source>
</evidence>
<evidence type="ECO:0000305" key="4"/>
<organism>
    <name type="scientific">Gallus gallus</name>
    <name type="common">Chicken</name>
    <dbReference type="NCBI Taxonomy" id="9031"/>
    <lineage>
        <taxon>Eukaryota</taxon>
        <taxon>Metazoa</taxon>
        <taxon>Chordata</taxon>
        <taxon>Craniata</taxon>
        <taxon>Vertebrata</taxon>
        <taxon>Euteleostomi</taxon>
        <taxon>Archelosauria</taxon>
        <taxon>Archosauria</taxon>
        <taxon>Dinosauria</taxon>
        <taxon>Saurischia</taxon>
        <taxon>Theropoda</taxon>
        <taxon>Coelurosauria</taxon>
        <taxon>Aves</taxon>
        <taxon>Neognathae</taxon>
        <taxon>Galloanserae</taxon>
        <taxon>Galliformes</taxon>
        <taxon>Phasianidae</taxon>
        <taxon>Phasianinae</taxon>
        <taxon>Gallus</taxon>
    </lineage>
</organism>
<gene>
    <name type="primary">CD200R1B</name>
</gene>
<feature type="chain" id="PRO_5000076442" description="Cell surface glycoprotein CD200 receptor 1-B">
    <location>
        <begin position="1"/>
        <end position="243"/>
    </location>
</feature>
<feature type="topological domain" description="Cytoplasmic" evidence="1">
    <location>
        <begin position="1"/>
        <end position="29"/>
    </location>
</feature>
<feature type="transmembrane region" description="Helical; Signal-anchor for type II membrane protein" evidence="1">
    <location>
        <begin position="30"/>
        <end position="47"/>
    </location>
</feature>
<feature type="topological domain" description="Lumenal" evidence="1">
    <location>
        <begin position="48"/>
        <end position="243"/>
    </location>
</feature>
<feature type="domain" description="Ig-like V-type">
    <location>
        <begin position="47"/>
        <end position="146"/>
    </location>
</feature>
<feature type="domain" description="Ig-like C2-type">
    <location>
        <begin position="144"/>
        <end position="228"/>
    </location>
</feature>
<feature type="glycosylation site" description="N-linked (GlcNAc...) asparagine" evidence="1">
    <location>
        <position position="64"/>
    </location>
</feature>
<feature type="glycosylation site" description="N-linked (GlcNAc...) asparagine" evidence="1">
    <location>
        <position position="67"/>
    </location>
</feature>
<feature type="glycosylation site" description="N-linked (GlcNAc...) asparagine" evidence="1">
    <location>
        <position position="127"/>
    </location>
</feature>
<feature type="glycosylation site" description="N-linked (GlcNAc...) asparagine" evidence="1">
    <location>
        <position position="193"/>
    </location>
</feature>
<feature type="glycosylation site" description="N-linked (GlcNAc...) asparagine" evidence="1">
    <location>
        <position position="222"/>
    </location>
</feature>
<feature type="glycosylation site" description="N-linked (GlcNAc...) asparagine" evidence="1">
    <location>
        <position position="228"/>
    </location>
</feature>
<feature type="disulfide bond" evidence="2">
    <location>
        <begin position="62"/>
        <end position="130"/>
    </location>
</feature>
<feature type="disulfide bond" evidence="2">
    <location>
        <begin position="165"/>
        <end position="214"/>
    </location>
</feature>
<sequence length="243" mass="26233">MEISQQAGWCKKPASPMNTRAALEAVRNTAWTIVLLTSAAVMGASGISRVSANLGHSTVMTCPNRTNISMVTWKINPKTGHQCTLAYLIDKDSTGKNSCSDRINWRSRPDWDQALEIQQVGKADEGNYTCEVVNADGNFHYLYHLTVLVAPRMALYCDDHGNPVCEAETVKPAAEISWVPESNSTPRADSHGNGTVTVVSRFAARSTNGKNPTCIVSHATLNETRSINCSSRTLAQLPGGSAP</sequence>
<dbReference type="EMBL" id="AM076730">
    <property type="protein sequence ID" value="CAJ28372.1"/>
    <property type="molecule type" value="mRNA"/>
</dbReference>
<dbReference type="EMBL" id="AJ720790">
    <property type="protein sequence ID" value="CAG32449.1"/>
    <property type="status" value="ALT_INIT"/>
    <property type="molecule type" value="mRNA"/>
</dbReference>
<dbReference type="RefSeq" id="NP_001025953.3">
    <property type="nucleotide sequence ID" value="NM_001030782.3"/>
</dbReference>
<dbReference type="SMR" id="Q2YHT5"/>
<dbReference type="FunCoup" id="Q2YHT5">
    <property type="interactions" value="187"/>
</dbReference>
<dbReference type="STRING" id="9031.ENSGALP00000029813"/>
<dbReference type="GlyCosmos" id="Q2YHT5">
    <property type="glycosylation" value="6 sites, No reported glycans"/>
</dbReference>
<dbReference type="GlyGen" id="Q2YHT5">
    <property type="glycosylation" value="6 sites"/>
</dbReference>
<dbReference type="PaxDb" id="9031-ENSGALP00000029813"/>
<dbReference type="Ensembl" id="ENSGALT00010012383.1">
    <property type="protein sequence ID" value="ENSGALP00010006947.1"/>
    <property type="gene ID" value="ENSGALG00010005233.1"/>
</dbReference>
<dbReference type="GeneID" id="418367"/>
<dbReference type="KEGG" id="gga:418367"/>
<dbReference type="CTD" id="418367"/>
<dbReference type="VEuPathDB" id="HostDB:geneid_418367"/>
<dbReference type="eggNOG" id="ENOG502SPS1">
    <property type="taxonomic scope" value="Eukaryota"/>
</dbReference>
<dbReference type="GeneTree" id="ENSGT00390000014496"/>
<dbReference type="InParanoid" id="Q2YHT5"/>
<dbReference type="OrthoDB" id="8915654at2759"/>
<dbReference type="PhylomeDB" id="Q2YHT5"/>
<dbReference type="PRO" id="PR:Q2YHT5"/>
<dbReference type="Proteomes" id="UP000000539">
    <property type="component" value="Chromosome 1"/>
</dbReference>
<dbReference type="GO" id="GO:0009897">
    <property type="term" value="C:external side of plasma membrane"/>
    <property type="evidence" value="ECO:0000318"/>
    <property type="project" value="GO_Central"/>
</dbReference>
<dbReference type="GO" id="GO:0038023">
    <property type="term" value="F:signaling receptor activity"/>
    <property type="evidence" value="ECO:0000318"/>
    <property type="project" value="GO_Central"/>
</dbReference>
<dbReference type="GO" id="GO:0150077">
    <property type="term" value="P:regulation of neuroinflammatory response"/>
    <property type="evidence" value="ECO:0007669"/>
    <property type="project" value="InterPro"/>
</dbReference>
<dbReference type="FunFam" id="2.60.40.10:FF:002547">
    <property type="entry name" value="Cell surface glycoprotein CD200 receptor 1-A"/>
    <property type="match status" value="1"/>
</dbReference>
<dbReference type="FunFam" id="2.60.40.10:FF:003231">
    <property type="entry name" value="Cell surface glycoprotein CD200 receptor 1-A"/>
    <property type="match status" value="1"/>
</dbReference>
<dbReference type="Gene3D" id="2.60.40.10">
    <property type="entry name" value="Immunoglobulins"/>
    <property type="match status" value="2"/>
</dbReference>
<dbReference type="InterPro" id="IPR040012">
    <property type="entry name" value="CD200R"/>
</dbReference>
<dbReference type="InterPro" id="IPR007110">
    <property type="entry name" value="Ig-like_dom"/>
</dbReference>
<dbReference type="InterPro" id="IPR036179">
    <property type="entry name" value="Ig-like_dom_sf"/>
</dbReference>
<dbReference type="InterPro" id="IPR013783">
    <property type="entry name" value="Ig-like_fold"/>
</dbReference>
<dbReference type="InterPro" id="IPR003599">
    <property type="entry name" value="Ig_sub"/>
</dbReference>
<dbReference type="InterPro" id="IPR003598">
    <property type="entry name" value="Ig_sub2"/>
</dbReference>
<dbReference type="InterPro" id="IPR013106">
    <property type="entry name" value="Ig_V-set"/>
</dbReference>
<dbReference type="PANTHER" id="PTHR21462:SF2">
    <property type="entry name" value="CELL SURFACE GLYCOPROTEIN CD200 RECEPTOR 2"/>
    <property type="match status" value="1"/>
</dbReference>
<dbReference type="PANTHER" id="PTHR21462">
    <property type="entry name" value="CELL SURFACE GLYCOPROTEIN OX2 RECEPTOR PRECURSOR"/>
    <property type="match status" value="1"/>
</dbReference>
<dbReference type="Pfam" id="PF07686">
    <property type="entry name" value="V-set"/>
    <property type="match status" value="1"/>
</dbReference>
<dbReference type="SMART" id="SM00409">
    <property type="entry name" value="IG"/>
    <property type="match status" value="1"/>
</dbReference>
<dbReference type="SMART" id="SM00408">
    <property type="entry name" value="IGc2"/>
    <property type="match status" value="1"/>
</dbReference>
<dbReference type="SUPFAM" id="SSF48726">
    <property type="entry name" value="Immunoglobulin"/>
    <property type="match status" value="2"/>
</dbReference>
<dbReference type="PROSITE" id="PS50835">
    <property type="entry name" value="IG_LIKE"/>
    <property type="match status" value="2"/>
</dbReference>
<name>MOR1B_CHICK</name>
<comment type="subcellular location">
    <subcellularLocation>
        <location evidence="4">Membrane</location>
        <topology evidence="4">Single-pass type II membrane protein</topology>
    </subcellularLocation>
</comment>
<comment type="tissue specificity">
    <text evidence="3">Expressed in peripheral blood lymphocytes (PBL) and peripheral blood mononuclear cells (PBMC).</text>
</comment>
<comment type="similarity">
    <text evidence="4">Belongs to the CD200R family.</text>
</comment>
<comment type="sequence caution" evidence="4">
    <conflict type="erroneous initiation">
        <sequence resource="EMBL-CDS" id="CAG32449"/>
    </conflict>
</comment>
<protein>
    <recommendedName>
        <fullName>Cell surface glycoprotein CD200 receptor 1-B</fullName>
    </recommendedName>
    <alternativeName>
        <fullName>CD200 cell surface glycoprotein receptor 1-B</fullName>
    </alternativeName>
    <alternativeName>
        <fullName>Cell surface glycoprotein OX2 receptor 1-B</fullName>
    </alternativeName>
</protein>
<proteinExistence type="evidence at transcript level"/>